<feature type="chain" id="PRO_1000003009" description="Phospho-N-acetylmuramoyl-pentapeptide-transferase">
    <location>
        <begin position="1"/>
        <end position="393"/>
    </location>
</feature>
<feature type="transmembrane region" description="Helical" evidence="1">
    <location>
        <begin position="29"/>
        <end position="49"/>
    </location>
</feature>
<feature type="transmembrane region" description="Helical" evidence="1">
    <location>
        <begin position="75"/>
        <end position="95"/>
    </location>
</feature>
<feature type="transmembrane region" description="Helical" evidence="1">
    <location>
        <begin position="101"/>
        <end position="121"/>
    </location>
</feature>
<feature type="transmembrane region" description="Helical" evidence="1">
    <location>
        <begin position="138"/>
        <end position="158"/>
    </location>
</feature>
<feature type="transmembrane region" description="Helical" evidence="1">
    <location>
        <begin position="193"/>
        <end position="213"/>
    </location>
</feature>
<feature type="transmembrane region" description="Helical" evidence="1">
    <location>
        <begin position="226"/>
        <end position="246"/>
    </location>
</feature>
<feature type="transmembrane region" description="Helical" evidence="1">
    <location>
        <begin position="263"/>
        <end position="283"/>
    </location>
</feature>
<feature type="transmembrane region" description="Helical" evidence="1">
    <location>
        <begin position="290"/>
        <end position="310"/>
    </location>
</feature>
<feature type="transmembrane region" description="Helical" evidence="1">
    <location>
        <begin position="315"/>
        <end position="335"/>
    </location>
</feature>
<feature type="transmembrane region" description="Helical" evidence="1">
    <location>
        <begin position="370"/>
        <end position="390"/>
    </location>
</feature>
<sequence>MLISLSQWLQLLYPEQLGFLRVFQYLTFRAVMAAMTALLIGLALGPIVIRRLTELKIGQPIREYGVAEHMVKQGTPTMGGALILLAIAISTLLWFDWSNRFVWIVMIVTFGFGAIGWVDDWRKVVDKNPEGMRSREKYFWQSLIGLVAALYLAFSVSETSNLRVLELFIRWVQSGFSNDLPPKADLIVPFFKSISYPLGVFGFIFLTYVVIVGSSNAVNLTDGLDGLAIMPVVMVGSALGIFAYATGSSVYANYLLLPHIPGAGELMIFCAAMAGAGLAFLWFNAYPAQVFMGDVGALALGGALGTIAVIVRQEVVLAIMGGIFVLEALSVMAQVTWFKYTKRRYGAGRRILLMAPLHHHFEKSGWKETQVVVRFWIITMLLCLVGLSSLKLR</sequence>
<protein>
    <recommendedName>
        <fullName evidence="1">Phospho-N-acetylmuramoyl-pentapeptide-transferase</fullName>
        <ecNumber evidence="1">2.7.8.13</ecNumber>
    </recommendedName>
    <alternativeName>
        <fullName evidence="1">UDP-MurNAc-pentapeptide phosphotransferase</fullName>
    </alternativeName>
</protein>
<comment type="function">
    <text evidence="1">Catalyzes the initial step of the lipid cycle reactions in the biosynthesis of the cell wall peptidoglycan: transfers peptidoglycan precursor phospho-MurNAc-pentapeptide from UDP-MurNAc-pentapeptide onto the lipid carrier undecaprenyl phosphate, yielding undecaprenyl-pyrophosphoryl-MurNAc-pentapeptide, known as lipid I.</text>
</comment>
<comment type="catalytic activity">
    <reaction evidence="1">
        <text>UDP-N-acetyl-alpha-D-muramoyl-L-alanyl-gamma-D-glutamyl-meso-2,6-diaminopimeloyl-D-alanyl-D-alanine + di-trans,octa-cis-undecaprenyl phosphate = di-trans,octa-cis-undecaprenyl diphospho-N-acetyl-alpha-D-muramoyl-L-alanyl-D-glutamyl-meso-2,6-diaminopimeloyl-D-alanyl-D-alanine + UMP</text>
        <dbReference type="Rhea" id="RHEA:28386"/>
        <dbReference type="ChEBI" id="CHEBI:57865"/>
        <dbReference type="ChEBI" id="CHEBI:60392"/>
        <dbReference type="ChEBI" id="CHEBI:61386"/>
        <dbReference type="ChEBI" id="CHEBI:61387"/>
        <dbReference type="EC" id="2.7.8.13"/>
    </reaction>
</comment>
<comment type="cofactor">
    <cofactor evidence="1">
        <name>Mg(2+)</name>
        <dbReference type="ChEBI" id="CHEBI:18420"/>
    </cofactor>
</comment>
<comment type="pathway">
    <text evidence="1">Cell wall biogenesis; peptidoglycan biosynthesis.</text>
</comment>
<comment type="subcellular location">
    <subcellularLocation>
        <location evidence="1">Cell inner membrane</location>
        <topology evidence="1">Multi-pass membrane protein</topology>
    </subcellularLocation>
</comment>
<comment type="similarity">
    <text evidence="1">Belongs to the glycosyltransferase 4 family. MraY subfamily.</text>
</comment>
<organism>
    <name type="scientific">Methylibium petroleiphilum (strain ATCC BAA-1232 / LMG 22953 / PM1)</name>
    <dbReference type="NCBI Taxonomy" id="420662"/>
    <lineage>
        <taxon>Bacteria</taxon>
        <taxon>Pseudomonadati</taxon>
        <taxon>Pseudomonadota</taxon>
        <taxon>Betaproteobacteria</taxon>
        <taxon>Burkholderiales</taxon>
        <taxon>Sphaerotilaceae</taxon>
        <taxon>Methylibium</taxon>
    </lineage>
</organism>
<accession>A2SCY2</accession>
<reference key="1">
    <citation type="journal article" date="2007" name="J. Bacteriol.">
        <title>Whole-genome analysis of the methyl tert-butyl ether-degrading beta-proteobacterium Methylibium petroleiphilum PM1.</title>
        <authorList>
            <person name="Kane S.R."/>
            <person name="Chakicherla A.Y."/>
            <person name="Chain P.S.G."/>
            <person name="Schmidt R."/>
            <person name="Shin M.W."/>
            <person name="Legler T.C."/>
            <person name="Scow K.M."/>
            <person name="Larimer F.W."/>
            <person name="Lucas S.M."/>
            <person name="Richardson P.M."/>
            <person name="Hristova K.R."/>
        </authorList>
    </citation>
    <scope>NUCLEOTIDE SEQUENCE [LARGE SCALE GENOMIC DNA]</scope>
    <source>
        <strain>ATCC BAA-1232 / LMG 22953 / PM1</strain>
    </source>
</reference>
<name>MRAY_METPP</name>
<keyword id="KW-0131">Cell cycle</keyword>
<keyword id="KW-0132">Cell division</keyword>
<keyword id="KW-0997">Cell inner membrane</keyword>
<keyword id="KW-1003">Cell membrane</keyword>
<keyword id="KW-0133">Cell shape</keyword>
<keyword id="KW-0961">Cell wall biogenesis/degradation</keyword>
<keyword id="KW-0460">Magnesium</keyword>
<keyword id="KW-0472">Membrane</keyword>
<keyword id="KW-0479">Metal-binding</keyword>
<keyword id="KW-0573">Peptidoglycan synthesis</keyword>
<keyword id="KW-1185">Reference proteome</keyword>
<keyword id="KW-0808">Transferase</keyword>
<keyword id="KW-0812">Transmembrane</keyword>
<keyword id="KW-1133">Transmembrane helix</keyword>
<evidence type="ECO:0000255" key="1">
    <source>
        <dbReference type="HAMAP-Rule" id="MF_00038"/>
    </source>
</evidence>
<dbReference type="EC" id="2.7.8.13" evidence="1"/>
<dbReference type="EMBL" id="CP000555">
    <property type="protein sequence ID" value="ABM93421.1"/>
    <property type="molecule type" value="Genomic_DNA"/>
</dbReference>
<dbReference type="RefSeq" id="WP_011828059.1">
    <property type="nucleotide sequence ID" value="NC_008825.1"/>
</dbReference>
<dbReference type="SMR" id="A2SCY2"/>
<dbReference type="STRING" id="420662.Mpe_A0459"/>
<dbReference type="KEGG" id="mpt:Mpe_A0459"/>
<dbReference type="eggNOG" id="COG0472">
    <property type="taxonomic scope" value="Bacteria"/>
</dbReference>
<dbReference type="HOGENOM" id="CLU_023982_0_0_4"/>
<dbReference type="UniPathway" id="UPA00219"/>
<dbReference type="Proteomes" id="UP000000366">
    <property type="component" value="Chromosome"/>
</dbReference>
<dbReference type="GO" id="GO:0005886">
    <property type="term" value="C:plasma membrane"/>
    <property type="evidence" value="ECO:0007669"/>
    <property type="project" value="UniProtKB-SubCell"/>
</dbReference>
<dbReference type="GO" id="GO:0046872">
    <property type="term" value="F:metal ion binding"/>
    <property type="evidence" value="ECO:0007669"/>
    <property type="project" value="UniProtKB-KW"/>
</dbReference>
<dbReference type="GO" id="GO:0008963">
    <property type="term" value="F:phospho-N-acetylmuramoyl-pentapeptide-transferase activity"/>
    <property type="evidence" value="ECO:0007669"/>
    <property type="project" value="UniProtKB-UniRule"/>
</dbReference>
<dbReference type="GO" id="GO:0051992">
    <property type="term" value="F:UDP-N-acetylmuramoyl-L-alanyl-D-glutamyl-meso-2,6-diaminopimelyl-D-alanyl-D-alanine:undecaprenyl-phosphate transferase activity"/>
    <property type="evidence" value="ECO:0007669"/>
    <property type="project" value="RHEA"/>
</dbReference>
<dbReference type="GO" id="GO:0051301">
    <property type="term" value="P:cell division"/>
    <property type="evidence" value="ECO:0007669"/>
    <property type="project" value="UniProtKB-KW"/>
</dbReference>
<dbReference type="GO" id="GO:0071555">
    <property type="term" value="P:cell wall organization"/>
    <property type="evidence" value="ECO:0007669"/>
    <property type="project" value="UniProtKB-KW"/>
</dbReference>
<dbReference type="GO" id="GO:0009252">
    <property type="term" value="P:peptidoglycan biosynthetic process"/>
    <property type="evidence" value="ECO:0007669"/>
    <property type="project" value="UniProtKB-UniRule"/>
</dbReference>
<dbReference type="GO" id="GO:0008360">
    <property type="term" value="P:regulation of cell shape"/>
    <property type="evidence" value="ECO:0007669"/>
    <property type="project" value="UniProtKB-KW"/>
</dbReference>
<dbReference type="CDD" id="cd06852">
    <property type="entry name" value="GT_MraY"/>
    <property type="match status" value="1"/>
</dbReference>
<dbReference type="HAMAP" id="MF_00038">
    <property type="entry name" value="MraY"/>
    <property type="match status" value="1"/>
</dbReference>
<dbReference type="InterPro" id="IPR000715">
    <property type="entry name" value="Glycosyl_transferase_4"/>
</dbReference>
<dbReference type="InterPro" id="IPR003524">
    <property type="entry name" value="PNAcMuramoyl-5peptid_Trfase"/>
</dbReference>
<dbReference type="InterPro" id="IPR018480">
    <property type="entry name" value="PNAcMuramoyl-5peptid_Trfase_CS"/>
</dbReference>
<dbReference type="NCBIfam" id="TIGR00445">
    <property type="entry name" value="mraY"/>
    <property type="match status" value="1"/>
</dbReference>
<dbReference type="PANTHER" id="PTHR22926">
    <property type="entry name" value="PHOSPHO-N-ACETYLMURAMOYL-PENTAPEPTIDE-TRANSFERASE"/>
    <property type="match status" value="1"/>
</dbReference>
<dbReference type="PANTHER" id="PTHR22926:SF5">
    <property type="entry name" value="PHOSPHO-N-ACETYLMURAMOYL-PENTAPEPTIDE-TRANSFERASE HOMOLOG"/>
    <property type="match status" value="1"/>
</dbReference>
<dbReference type="Pfam" id="PF00953">
    <property type="entry name" value="Glycos_transf_4"/>
    <property type="match status" value="1"/>
</dbReference>
<dbReference type="PROSITE" id="PS01347">
    <property type="entry name" value="MRAY_1"/>
    <property type="match status" value="1"/>
</dbReference>
<dbReference type="PROSITE" id="PS01348">
    <property type="entry name" value="MRAY_2"/>
    <property type="match status" value="1"/>
</dbReference>
<gene>
    <name evidence="1" type="primary">mraY</name>
    <name type="ordered locus">Mpe_A0459</name>
</gene>
<proteinExistence type="inferred from homology"/>